<reference key="1">
    <citation type="journal article" date="2004" name="DNA Res.">
        <title>Complete nucleotide sequence of the sugarcane (Saccharum officinarum) chloroplast genome: a comparative analysis of four monocot chloroplast genomes.</title>
        <authorList>
            <person name="Asano T."/>
            <person name="Tsudzuki T."/>
            <person name="Takahashi S."/>
            <person name="Shimada H."/>
            <person name="Kadowaki K."/>
        </authorList>
    </citation>
    <scope>NUCLEOTIDE SEQUENCE [LARGE SCALE GENOMIC DNA]</scope>
</reference>
<organism>
    <name type="scientific">Saccharum officinarum</name>
    <name type="common">Sugarcane</name>
    <dbReference type="NCBI Taxonomy" id="4547"/>
    <lineage>
        <taxon>Eukaryota</taxon>
        <taxon>Viridiplantae</taxon>
        <taxon>Streptophyta</taxon>
        <taxon>Embryophyta</taxon>
        <taxon>Tracheophyta</taxon>
        <taxon>Spermatophyta</taxon>
        <taxon>Magnoliopsida</taxon>
        <taxon>Liliopsida</taxon>
        <taxon>Poales</taxon>
        <taxon>Poaceae</taxon>
        <taxon>PACMAD clade</taxon>
        <taxon>Panicoideae</taxon>
        <taxon>Andropogonodae</taxon>
        <taxon>Andropogoneae</taxon>
        <taxon>Saccharinae</taxon>
        <taxon>Saccharum</taxon>
        <taxon>Saccharum officinarum species complex</taxon>
    </lineage>
</organism>
<dbReference type="EC" id="7.1.1.-" evidence="1"/>
<dbReference type="EMBL" id="AP006714">
    <property type="protein sequence ID" value="BAD27374.1"/>
    <property type="molecule type" value="Genomic_DNA"/>
</dbReference>
<dbReference type="SMR" id="P0CD42"/>
<dbReference type="GO" id="GO:0009535">
    <property type="term" value="C:chloroplast thylakoid membrane"/>
    <property type="evidence" value="ECO:0007669"/>
    <property type="project" value="UniProtKB-SubCell"/>
</dbReference>
<dbReference type="GO" id="GO:0008137">
    <property type="term" value="F:NADH dehydrogenase (ubiquinone) activity"/>
    <property type="evidence" value="ECO:0007669"/>
    <property type="project" value="InterPro"/>
</dbReference>
<dbReference type="GO" id="GO:0048038">
    <property type="term" value="F:quinone binding"/>
    <property type="evidence" value="ECO:0007669"/>
    <property type="project" value="UniProtKB-KW"/>
</dbReference>
<dbReference type="GO" id="GO:0042773">
    <property type="term" value="P:ATP synthesis coupled electron transport"/>
    <property type="evidence" value="ECO:0007669"/>
    <property type="project" value="InterPro"/>
</dbReference>
<dbReference type="GO" id="GO:0019684">
    <property type="term" value="P:photosynthesis, light reaction"/>
    <property type="evidence" value="ECO:0007669"/>
    <property type="project" value="UniProtKB-UniRule"/>
</dbReference>
<dbReference type="HAMAP" id="MF_00445">
    <property type="entry name" value="NDH1_NuoN_1"/>
    <property type="match status" value="1"/>
</dbReference>
<dbReference type="InterPro" id="IPR010096">
    <property type="entry name" value="NADH-Q_OxRdtase_suN/2"/>
</dbReference>
<dbReference type="InterPro" id="IPR001750">
    <property type="entry name" value="ND/Mrp_TM"/>
</dbReference>
<dbReference type="InterPro" id="IPR045693">
    <property type="entry name" value="Ndh2_N"/>
</dbReference>
<dbReference type="NCBIfam" id="TIGR01770">
    <property type="entry name" value="NDH_I_N"/>
    <property type="match status" value="1"/>
</dbReference>
<dbReference type="NCBIfam" id="NF002701">
    <property type="entry name" value="PRK02504.1"/>
    <property type="match status" value="1"/>
</dbReference>
<dbReference type="PANTHER" id="PTHR22773">
    <property type="entry name" value="NADH DEHYDROGENASE"/>
    <property type="match status" value="1"/>
</dbReference>
<dbReference type="Pfam" id="PF19530">
    <property type="entry name" value="Ndh2_N"/>
    <property type="match status" value="1"/>
</dbReference>
<dbReference type="Pfam" id="PF00361">
    <property type="entry name" value="Proton_antipo_M"/>
    <property type="match status" value="1"/>
</dbReference>
<dbReference type="PRINTS" id="PR01434">
    <property type="entry name" value="NADHDHGNASE5"/>
</dbReference>
<evidence type="ECO:0000255" key="1">
    <source>
        <dbReference type="HAMAP-Rule" id="MF_00445"/>
    </source>
</evidence>
<keyword id="KW-0150">Chloroplast</keyword>
<keyword id="KW-0472">Membrane</keyword>
<keyword id="KW-0520">NAD</keyword>
<keyword id="KW-0521">NADP</keyword>
<keyword id="KW-0934">Plastid</keyword>
<keyword id="KW-0618">Plastoquinone</keyword>
<keyword id="KW-0874">Quinone</keyword>
<keyword id="KW-0793">Thylakoid</keyword>
<keyword id="KW-1278">Translocase</keyword>
<keyword id="KW-0812">Transmembrane</keyword>
<keyword id="KW-1133">Transmembrane helix</keyword>
<keyword id="KW-0813">Transport</keyword>
<name>NU2C1_SACOF</name>
<geneLocation type="chloroplast"/>
<sequence>MIWHVQNENFILDSTRIFMKAFHLLLFNGSFIFPECILIFGLILLLMIDLTSDQKDRPWFYFISSTSLVISITALLFRWREEPIISFSGNFQTNNFNEIFQFLILLCSTLCIPLSVEYIECTEMAITEFLLFVLTATLGGMFLCGANDLITIFVAPECFSLCSYLLSGYTKRDLRSNEATMKYLLMGGASSSILVHGFSWLYGSSGGEIELQEIVNGLINTQMYNSPGISIALIFITVGLGFKLSPAPFHQWTPDVYEGSPTPVVAFLSVTSKVAASALATRILDIPFYFSSNEWHLLLEILAILSMILGNLLAITQTSMKRMLAYSSIGQIGYVIIGIIVGDSNDGYASMITYMLFYISMNLGTFACIVLFGLRTGTDNIRDYAGLYTKDPFLALSLALCLLSLGGLPPLAGFFGKLYLFWCGWQAGLYFLVSIGLLTSVLSIYYYLKIIKLLMTGRNQEITPYVRNYRRSPLRSNNSIELSMTVCVIASTIPGISMNPILAIAQDTLF</sequence>
<feature type="chain" id="PRO_0000117676" description="NAD(P)H-quinone oxidoreductase subunit 2 A, chloroplastic">
    <location>
        <begin position="1"/>
        <end position="510"/>
    </location>
</feature>
<feature type="transmembrane region" description="Helical" evidence="1">
    <location>
        <begin position="31"/>
        <end position="51"/>
    </location>
</feature>
<feature type="transmembrane region" description="Helical" evidence="1">
    <location>
        <begin position="59"/>
        <end position="79"/>
    </location>
</feature>
<feature type="transmembrane region" description="Helical" evidence="1">
    <location>
        <begin position="99"/>
        <end position="119"/>
    </location>
</feature>
<feature type="transmembrane region" description="Helical" evidence="1">
    <location>
        <begin position="124"/>
        <end position="144"/>
    </location>
</feature>
<feature type="transmembrane region" description="Helical" evidence="1">
    <location>
        <begin position="149"/>
        <end position="169"/>
    </location>
</feature>
<feature type="transmembrane region" description="Helical" evidence="1">
    <location>
        <begin position="183"/>
        <end position="203"/>
    </location>
</feature>
<feature type="transmembrane region" description="Helical" evidence="1">
    <location>
        <begin position="229"/>
        <end position="249"/>
    </location>
</feature>
<feature type="transmembrane region" description="Helical" evidence="1">
    <location>
        <begin position="295"/>
        <end position="315"/>
    </location>
</feature>
<feature type="transmembrane region" description="Helical" evidence="1">
    <location>
        <begin position="323"/>
        <end position="343"/>
    </location>
</feature>
<feature type="transmembrane region" description="Helical" evidence="1">
    <location>
        <begin position="354"/>
        <end position="374"/>
    </location>
</feature>
<feature type="transmembrane region" description="Helical" evidence="1">
    <location>
        <begin position="395"/>
        <end position="415"/>
    </location>
</feature>
<feature type="transmembrane region" description="Helical" evidence="1">
    <location>
        <begin position="418"/>
        <end position="438"/>
    </location>
</feature>
<proteinExistence type="inferred from homology"/>
<gene>
    <name evidence="1" type="primary">ndhB1</name>
</gene>
<accession>P0CD42</accession>
<accession>Q6ENN2</accession>
<comment type="function">
    <text evidence="1">NDH shuttles electrons from NAD(P)H:plastoquinone, via FMN and iron-sulfur (Fe-S) centers, to quinones in the photosynthetic chain and possibly in a chloroplast respiratory chain. The immediate electron acceptor for the enzyme in this species is believed to be plastoquinone. Couples the redox reaction to proton translocation, and thus conserves the redox energy in a proton gradient.</text>
</comment>
<comment type="catalytic activity">
    <reaction evidence="1">
        <text>a plastoquinone + NADH + (n+1) H(+)(in) = a plastoquinol + NAD(+) + n H(+)(out)</text>
        <dbReference type="Rhea" id="RHEA:42608"/>
        <dbReference type="Rhea" id="RHEA-COMP:9561"/>
        <dbReference type="Rhea" id="RHEA-COMP:9562"/>
        <dbReference type="ChEBI" id="CHEBI:15378"/>
        <dbReference type="ChEBI" id="CHEBI:17757"/>
        <dbReference type="ChEBI" id="CHEBI:57540"/>
        <dbReference type="ChEBI" id="CHEBI:57945"/>
        <dbReference type="ChEBI" id="CHEBI:62192"/>
    </reaction>
</comment>
<comment type="catalytic activity">
    <reaction evidence="1">
        <text>a plastoquinone + NADPH + (n+1) H(+)(in) = a plastoquinol + NADP(+) + n H(+)(out)</text>
        <dbReference type="Rhea" id="RHEA:42612"/>
        <dbReference type="Rhea" id="RHEA-COMP:9561"/>
        <dbReference type="Rhea" id="RHEA-COMP:9562"/>
        <dbReference type="ChEBI" id="CHEBI:15378"/>
        <dbReference type="ChEBI" id="CHEBI:17757"/>
        <dbReference type="ChEBI" id="CHEBI:57783"/>
        <dbReference type="ChEBI" id="CHEBI:58349"/>
        <dbReference type="ChEBI" id="CHEBI:62192"/>
    </reaction>
</comment>
<comment type="subunit">
    <text evidence="1">NDH is composed of at least 16 different subunits, 5 of which are encoded in the nucleus.</text>
</comment>
<comment type="subcellular location">
    <subcellularLocation>
        <location evidence="1">Plastid</location>
        <location evidence="1">Chloroplast thylakoid membrane</location>
        <topology evidence="1">Multi-pass membrane protein</topology>
    </subcellularLocation>
</comment>
<comment type="similarity">
    <text evidence="1">Belongs to the complex I subunit 2 family.</text>
</comment>
<protein>
    <recommendedName>
        <fullName evidence="1">NAD(P)H-quinone oxidoreductase subunit 2 A, chloroplastic</fullName>
        <ecNumber evidence="1">7.1.1.-</ecNumber>
    </recommendedName>
    <alternativeName>
        <fullName evidence="1">NAD(P)H dehydrogenase, subunit 2 A</fullName>
    </alternativeName>
    <alternativeName>
        <fullName evidence="1">NADH-plastoquinone oxidoreductase subunit 2 A</fullName>
    </alternativeName>
</protein>